<feature type="chain" id="PRO_0000140754" description="3-dehydroquinate synthase">
    <location>
        <begin position="1"/>
        <end position="365"/>
    </location>
</feature>
<feature type="binding site" evidence="1">
    <location>
        <begin position="106"/>
        <end position="110"/>
    </location>
    <ligand>
        <name>NAD(+)</name>
        <dbReference type="ChEBI" id="CHEBI:57540"/>
    </ligand>
</feature>
<feature type="binding site" evidence="1">
    <location>
        <begin position="130"/>
        <end position="131"/>
    </location>
    <ligand>
        <name>NAD(+)</name>
        <dbReference type="ChEBI" id="CHEBI:57540"/>
    </ligand>
</feature>
<feature type="binding site" evidence="1">
    <location>
        <position position="142"/>
    </location>
    <ligand>
        <name>NAD(+)</name>
        <dbReference type="ChEBI" id="CHEBI:57540"/>
    </ligand>
</feature>
<feature type="binding site" evidence="1">
    <location>
        <position position="151"/>
    </location>
    <ligand>
        <name>NAD(+)</name>
        <dbReference type="ChEBI" id="CHEBI:57540"/>
    </ligand>
</feature>
<feature type="binding site" evidence="1">
    <location>
        <begin position="169"/>
        <end position="172"/>
    </location>
    <ligand>
        <name>NAD(+)</name>
        <dbReference type="ChEBI" id="CHEBI:57540"/>
    </ligand>
</feature>
<feature type="binding site" evidence="1">
    <location>
        <position position="184"/>
    </location>
    <ligand>
        <name>Zn(2+)</name>
        <dbReference type="ChEBI" id="CHEBI:29105"/>
    </ligand>
</feature>
<feature type="binding site" evidence="1">
    <location>
        <position position="247"/>
    </location>
    <ligand>
        <name>Zn(2+)</name>
        <dbReference type="ChEBI" id="CHEBI:29105"/>
    </ligand>
</feature>
<feature type="binding site" evidence="1">
    <location>
        <position position="264"/>
    </location>
    <ligand>
        <name>Zn(2+)</name>
        <dbReference type="ChEBI" id="CHEBI:29105"/>
    </ligand>
</feature>
<proteinExistence type="inferred from homology"/>
<dbReference type="EC" id="4.2.3.4" evidence="1"/>
<dbReference type="EMBL" id="AL591981">
    <property type="protein sequence ID" value="CAD00005.1"/>
    <property type="molecule type" value="Genomic_DNA"/>
</dbReference>
<dbReference type="PIR" id="AG1315">
    <property type="entry name" value="AG1315"/>
</dbReference>
<dbReference type="RefSeq" id="NP_465451.1">
    <property type="nucleotide sequence ID" value="NC_003210.1"/>
</dbReference>
<dbReference type="RefSeq" id="WP_003723910.1">
    <property type="nucleotide sequence ID" value="NZ_CP149495.1"/>
</dbReference>
<dbReference type="SMR" id="Q8Y5X6"/>
<dbReference type="STRING" id="169963.gene:17594612"/>
<dbReference type="PaxDb" id="169963-lmo1927"/>
<dbReference type="EnsemblBacteria" id="CAD00005">
    <property type="protein sequence ID" value="CAD00005"/>
    <property type="gene ID" value="CAD00005"/>
</dbReference>
<dbReference type="GeneID" id="985753"/>
<dbReference type="KEGG" id="lmo:lmo1927"/>
<dbReference type="PATRIC" id="fig|169963.11.peg.1973"/>
<dbReference type="eggNOG" id="COG0337">
    <property type="taxonomic scope" value="Bacteria"/>
</dbReference>
<dbReference type="HOGENOM" id="CLU_001201_0_1_9"/>
<dbReference type="OrthoDB" id="9806583at2"/>
<dbReference type="PhylomeDB" id="Q8Y5X6"/>
<dbReference type="BioCyc" id="LMON169963:LMO1927-MONOMER"/>
<dbReference type="UniPathway" id="UPA00053">
    <property type="reaction ID" value="UER00085"/>
</dbReference>
<dbReference type="Proteomes" id="UP000000817">
    <property type="component" value="Chromosome"/>
</dbReference>
<dbReference type="GO" id="GO:0005737">
    <property type="term" value="C:cytoplasm"/>
    <property type="evidence" value="ECO:0007669"/>
    <property type="project" value="UniProtKB-SubCell"/>
</dbReference>
<dbReference type="GO" id="GO:0003856">
    <property type="term" value="F:3-dehydroquinate synthase activity"/>
    <property type="evidence" value="ECO:0000318"/>
    <property type="project" value="GO_Central"/>
</dbReference>
<dbReference type="GO" id="GO:0046872">
    <property type="term" value="F:metal ion binding"/>
    <property type="evidence" value="ECO:0007669"/>
    <property type="project" value="UniProtKB-KW"/>
</dbReference>
<dbReference type="GO" id="GO:0000166">
    <property type="term" value="F:nucleotide binding"/>
    <property type="evidence" value="ECO:0007669"/>
    <property type="project" value="UniProtKB-KW"/>
</dbReference>
<dbReference type="GO" id="GO:0008652">
    <property type="term" value="P:amino acid biosynthetic process"/>
    <property type="evidence" value="ECO:0007669"/>
    <property type="project" value="UniProtKB-KW"/>
</dbReference>
<dbReference type="GO" id="GO:0009073">
    <property type="term" value="P:aromatic amino acid family biosynthetic process"/>
    <property type="evidence" value="ECO:0000318"/>
    <property type="project" value="GO_Central"/>
</dbReference>
<dbReference type="GO" id="GO:0009423">
    <property type="term" value="P:chorismate biosynthetic process"/>
    <property type="evidence" value="ECO:0007669"/>
    <property type="project" value="UniProtKB-UniRule"/>
</dbReference>
<dbReference type="CDD" id="cd08195">
    <property type="entry name" value="DHQS"/>
    <property type="match status" value="1"/>
</dbReference>
<dbReference type="FunFam" id="1.20.1090.10:FF:000019">
    <property type="entry name" value="3-dehydroquinate synthase"/>
    <property type="match status" value="1"/>
</dbReference>
<dbReference type="FunFam" id="3.40.50.1970:FF:000026">
    <property type="entry name" value="3-dehydroquinate synthase"/>
    <property type="match status" value="1"/>
</dbReference>
<dbReference type="Gene3D" id="3.40.50.1970">
    <property type="match status" value="1"/>
</dbReference>
<dbReference type="Gene3D" id="1.20.1090.10">
    <property type="entry name" value="Dehydroquinate synthase-like - alpha domain"/>
    <property type="match status" value="1"/>
</dbReference>
<dbReference type="HAMAP" id="MF_00110">
    <property type="entry name" value="DHQ_synthase"/>
    <property type="match status" value="1"/>
</dbReference>
<dbReference type="InterPro" id="IPR050071">
    <property type="entry name" value="Dehydroquinate_synthase"/>
</dbReference>
<dbReference type="InterPro" id="IPR016037">
    <property type="entry name" value="DHQ_synth_AroB"/>
</dbReference>
<dbReference type="InterPro" id="IPR030963">
    <property type="entry name" value="DHQ_synth_fam"/>
</dbReference>
<dbReference type="InterPro" id="IPR030960">
    <property type="entry name" value="DHQS/DOIS_N"/>
</dbReference>
<dbReference type="InterPro" id="IPR056179">
    <property type="entry name" value="DHQS_C"/>
</dbReference>
<dbReference type="NCBIfam" id="TIGR01357">
    <property type="entry name" value="aroB"/>
    <property type="match status" value="1"/>
</dbReference>
<dbReference type="PANTHER" id="PTHR43622">
    <property type="entry name" value="3-DEHYDROQUINATE SYNTHASE"/>
    <property type="match status" value="1"/>
</dbReference>
<dbReference type="PANTHER" id="PTHR43622:SF7">
    <property type="entry name" value="3-DEHYDROQUINATE SYNTHASE, CHLOROPLASTIC"/>
    <property type="match status" value="1"/>
</dbReference>
<dbReference type="Pfam" id="PF01761">
    <property type="entry name" value="DHQ_synthase"/>
    <property type="match status" value="1"/>
</dbReference>
<dbReference type="Pfam" id="PF24621">
    <property type="entry name" value="DHQS_C"/>
    <property type="match status" value="1"/>
</dbReference>
<dbReference type="PIRSF" id="PIRSF001455">
    <property type="entry name" value="DHQ_synth"/>
    <property type="match status" value="1"/>
</dbReference>
<dbReference type="SUPFAM" id="SSF56796">
    <property type="entry name" value="Dehydroquinate synthase-like"/>
    <property type="match status" value="1"/>
</dbReference>
<gene>
    <name evidence="1" type="primary">aroB</name>
    <name type="ordered locus">lmo1927</name>
</gene>
<comment type="function">
    <text evidence="1">Catalyzes the conversion of 3-deoxy-D-arabino-heptulosonate 7-phosphate (DAHP) to dehydroquinate (DHQ).</text>
</comment>
<comment type="catalytic activity">
    <reaction evidence="1">
        <text>7-phospho-2-dehydro-3-deoxy-D-arabino-heptonate = 3-dehydroquinate + phosphate</text>
        <dbReference type="Rhea" id="RHEA:21968"/>
        <dbReference type="ChEBI" id="CHEBI:32364"/>
        <dbReference type="ChEBI" id="CHEBI:43474"/>
        <dbReference type="ChEBI" id="CHEBI:58394"/>
        <dbReference type="EC" id="4.2.3.4"/>
    </reaction>
</comment>
<comment type="cofactor">
    <cofactor evidence="1">
        <name>NAD(+)</name>
        <dbReference type="ChEBI" id="CHEBI:57540"/>
    </cofactor>
</comment>
<comment type="cofactor">
    <cofactor evidence="1">
        <name>Co(2+)</name>
        <dbReference type="ChEBI" id="CHEBI:48828"/>
    </cofactor>
    <cofactor evidence="1">
        <name>Zn(2+)</name>
        <dbReference type="ChEBI" id="CHEBI:29105"/>
    </cofactor>
    <text evidence="1">Binds 1 divalent metal cation per subunit. Can use either Co(2+) or Zn(2+).</text>
</comment>
<comment type="pathway">
    <text evidence="1">Metabolic intermediate biosynthesis; chorismate biosynthesis; chorismate from D-erythrose 4-phosphate and phosphoenolpyruvate: step 2/7.</text>
</comment>
<comment type="subcellular location">
    <subcellularLocation>
        <location evidence="1">Cytoplasm</location>
    </subcellularLocation>
</comment>
<comment type="similarity">
    <text evidence="1">Belongs to the sugar phosphate cyclases superfamily. Dehydroquinate synthase family.</text>
</comment>
<protein>
    <recommendedName>
        <fullName evidence="1">3-dehydroquinate synthase</fullName>
        <shortName evidence="1">DHQS</shortName>
        <ecNumber evidence="1">4.2.3.4</ecNumber>
    </recommendedName>
</protein>
<sequence>MPEITVRAKSKTYPVYINEFALEDIREKWTKSLAKFSHVFVLTDGHVAELHKAKLDAVLADLPVVTYYVAPNGEEAKTFRVYEDVMTKMIETGLDRKAVLIAFGGGVIGDLGGFVAATYMRGIPFYQVPTTVLAHDSAVGGKVAINHPLGKNMIGNFYQPEAVIYDTQFFATLPERELRSGFAEMIKHALISDLTLLRALMDTFTEPKDFYTKDLTPFLQRGIEIKANIVAQDETEQGVRAYLNFGHTFGHALEAYGNFGKWLHGEAITYGMIYALTMSETIYGLDFDLAEFKTWLEQLGYDTTFDASVPFSKILENMRHDKKTTFNEISMVLLEEIGKPVIFKADDDLIFETYKRVMRKGGNVI</sequence>
<organism>
    <name type="scientific">Listeria monocytogenes serovar 1/2a (strain ATCC BAA-679 / EGD-e)</name>
    <dbReference type="NCBI Taxonomy" id="169963"/>
    <lineage>
        <taxon>Bacteria</taxon>
        <taxon>Bacillati</taxon>
        <taxon>Bacillota</taxon>
        <taxon>Bacilli</taxon>
        <taxon>Bacillales</taxon>
        <taxon>Listeriaceae</taxon>
        <taxon>Listeria</taxon>
    </lineage>
</organism>
<keyword id="KW-0028">Amino-acid biosynthesis</keyword>
<keyword id="KW-0057">Aromatic amino acid biosynthesis</keyword>
<keyword id="KW-0170">Cobalt</keyword>
<keyword id="KW-0963">Cytoplasm</keyword>
<keyword id="KW-0456">Lyase</keyword>
<keyword id="KW-0479">Metal-binding</keyword>
<keyword id="KW-0520">NAD</keyword>
<keyword id="KW-0547">Nucleotide-binding</keyword>
<keyword id="KW-1185">Reference proteome</keyword>
<keyword id="KW-0862">Zinc</keyword>
<accession>Q8Y5X6</accession>
<reference key="1">
    <citation type="journal article" date="2001" name="Science">
        <title>Comparative genomics of Listeria species.</title>
        <authorList>
            <person name="Glaser P."/>
            <person name="Frangeul L."/>
            <person name="Buchrieser C."/>
            <person name="Rusniok C."/>
            <person name="Amend A."/>
            <person name="Baquero F."/>
            <person name="Berche P."/>
            <person name="Bloecker H."/>
            <person name="Brandt P."/>
            <person name="Chakraborty T."/>
            <person name="Charbit A."/>
            <person name="Chetouani F."/>
            <person name="Couve E."/>
            <person name="de Daruvar A."/>
            <person name="Dehoux P."/>
            <person name="Domann E."/>
            <person name="Dominguez-Bernal G."/>
            <person name="Duchaud E."/>
            <person name="Durant L."/>
            <person name="Dussurget O."/>
            <person name="Entian K.-D."/>
            <person name="Fsihi H."/>
            <person name="Garcia-del Portillo F."/>
            <person name="Garrido P."/>
            <person name="Gautier L."/>
            <person name="Goebel W."/>
            <person name="Gomez-Lopez N."/>
            <person name="Hain T."/>
            <person name="Hauf J."/>
            <person name="Jackson D."/>
            <person name="Jones L.-M."/>
            <person name="Kaerst U."/>
            <person name="Kreft J."/>
            <person name="Kuhn M."/>
            <person name="Kunst F."/>
            <person name="Kurapkat G."/>
            <person name="Madueno E."/>
            <person name="Maitournam A."/>
            <person name="Mata Vicente J."/>
            <person name="Ng E."/>
            <person name="Nedjari H."/>
            <person name="Nordsiek G."/>
            <person name="Novella S."/>
            <person name="de Pablos B."/>
            <person name="Perez-Diaz J.-C."/>
            <person name="Purcell R."/>
            <person name="Remmel B."/>
            <person name="Rose M."/>
            <person name="Schlueter T."/>
            <person name="Simoes N."/>
            <person name="Tierrez A."/>
            <person name="Vazquez-Boland J.-A."/>
            <person name="Voss H."/>
            <person name="Wehland J."/>
            <person name="Cossart P."/>
        </authorList>
    </citation>
    <scope>NUCLEOTIDE SEQUENCE [LARGE SCALE GENOMIC DNA]</scope>
    <source>
        <strain>ATCC BAA-679 / EGD-e</strain>
    </source>
</reference>
<name>AROB_LISMO</name>
<evidence type="ECO:0000255" key="1">
    <source>
        <dbReference type="HAMAP-Rule" id="MF_00110"/>
    </source>
</evidence>